<reference key="1">
    <citation type="journal article" date="2015" name="Proc. Natl. Acad. Sci. U.S.A.">
        <title>Trichodesmium genome maintains abundant, widespread noncoding DNA in situ, despite oligotrophic lifestyle.</title>
        <authorList>
            <person name="Walworth N."/>
            <person name="Pfreundt U."/>
            <person name="Nelson W.C."/>
            <person name="Mincer T."/>
            <person name="Heidelberg J.F."/>
            <person name="Fu F."/>
            <person name="Waterbury J.B."/>
            <person name="Glavina del Rio T."/>
            <person name="Goodwin L."/>
            <person name="Kyrpides N.C."/>
            <person name="Land M.L."/>
            <person name="Woyke T."/>
            <person name="Hutchins D.A."/>
            <person name="Hess W.R."/>
            <person name="Webb E.A."/>
        </authorList>
    </citation>
    <scope>NUCLEOTIDE SEQUENCE [LARGE SCALE GENOMIC DNA]</scope>
    <source>
        <strain>IMS101</strain>
    </source>
</reference>
<accession>Q10VU1</accession>
<protein>
    <recommendedName>
        <fullName evidence="1">Photosystem II reaction center protein T</fullName>
        <shortName evidence="1">PSII-T</shortName>
    </recommendedName>
</protein>
<keyword id="KW-0472">Membrane</keyword>
<keyword id="KW-0602">Photosynthesis</keyword>
<keyword id="KW-0604">Photosystem II</keyword>
<keyword id="KW-0793">Thylakoid</keyword>
<keyword id="KW-0812">Transmembrane</keyword>
<keyword id="KW-1133">Transmembrane helix</keyword>
<evidence type="ECO:0000255" key="1">
    <source>
        <dbReference type="HAMAP-Rule" id="MF_00808"/>
    </source>
</evidence>
<name>PSBT_TRIEI</name>
<dbReference type="EMBL" id="CP000393">
    <property type="protein sequence ID" value="ABG53633.1"/>
    <property type="molecule type" value="Genomic_DNA"/>
</dbReference>
<dbReference type="RefSeq" id="WP_011613950.1">
    <property type="nucleotide sequence ID" value="NC_008312.1"/>
</dbReference>
<dbReference type="SMR" id="Q10VU1"/>
<dbReference type="STRING" id="203124.Tery_4665"/>
<dbReference type="KEGG" id="ter:Tery_4665"/>
<dbReference type="eggNOG" id="ENOG5033APQ">
    <property type="taxonomic scope" value="Bacteria"/>
</dbReference>
<dbReference type="HOGENOM" id="CLU_217078_1_0_3"/>
<dbReference type="OrthoDB" id="427659at2"/>
<dbReference type="GO" id="GO:0009539">
    <property type="term" value="C:photosystem II reaction center"/>
    <property type="evidence" value="ECO:0007669"/>
    <property type="project" value="InterPro"/>
</dbReference>
<dbReference type="GO" id="GO:0031676">
    <property type="term" value="C:plasma membrane-derived thylakoid membrane"/>
    <property type="evidence" value="ECO:0007669"/>
    <property type="project" value="UniProtKB-SubCell"/>
</dbReference>
<dbReference type="GO" id="GO:0015979">
    <property type="term" value="P:photosynthesis"/>
    <property type="evidence" value="ECO:0007669"/>
    <property type="project" value="UniProtKB-UniRule"/>
</dbReference>
<dbReference type="HAMAP" id="MF_00808">
    <property type="entry name" value="PSII_PsbT"/>
    <property type="match status" value="1"/>
</dbReference>
<dbReference type="InterPro" id="IPR001743">
    <property type="entry name" value="PSII_PsbT"/>
</dbReference>
<dbReference type="InterPro" id="IPR037268">
    <property type="entry name" value="PSII_PsbT_sf"/>
</dbReference>
<dbReference type="NCBIfam" id="NF008825">
    <property type="entry name" value="PRK11875.1"/>
    <property type="match status" value="1"/>
</dbReference>
<dbReference type="PANTHER" id="PTHR36411">
    <property type="match status" value="1"/>
</dbReference>
<dbReference type="PANTHER" id="PTHR36411:SF2">
    <property type="entry name" value="PHOTOSYSTEM II REACTION CENTER PROTEIN T"/>
    <property type="match status" value="1"/>
</dbReference>
<dbReference type="Pfam" id="PF01405">
    <property type="entry name" value="PsbT"/>
    <property type="match status" value="1"/>
</dbReference>
<dbReference type="SUPFAM" id="SSF161029">
    <property type="entry name" value="Photosystem II reaction center protein T, PsbT"/>
    <property type="match status" value="1"/>
</dbReference>
<sequence length="31" mass="3364">MESAAYILVLALALGVIFFAIAFRDPPRIGK</sequence>
<gene>
    <name evidence="1" type="primary">psbT</name>
    <name type="ordered locus">Tery_4665</name>
</gene>
<comment type="function">
    <text evidence="1">Found at the monomer-monomer interface of the photosystem II (PS II) dimer, plays a role in assembly and dimerization of PSII. PSII is a light-driven water plastoquinone oxidoreductase, using light energy to abstract electrons from H(2)O, generating a proton gradient subsequently used for ATP formation.</text>
</comment>
<comment type="subunit">
    <text evidence="1">PSII is composed of 1 copy each of membrane proteins PsbA, PsbB, PsbC, PsbD, PsbE, PsbF, PsbH, PsbI, PsbJ, PsbK, PsbL, PsbM, PsbT, PsbX, PsbY, PsbZ, Psb30/Ycf12, peripheral proteins PsbO, CyanoQ (PsbQ), PsbU, PsbV and a large number of cofactors. It forms dimeric complexes.</text>
</comment>
<comment type="subcellular location">
    <subcellularLocation>
        <location evidence="1">Cellular thylakoid membrane</location>
        <topology evidence="1">Single-pass membrane protein</topology>
    </subcellularLocation>
</comment>
<comment type="similarity">
    <text evidence="1">Belongs to the PsbT family.</text>
</comment>
<proteinExistence type="inferred from homology"/>
<feature type="chain" id="PRO_1000047106" description="Photosystem II reaction center protein T">
    <location>
        <begin position="1"/>
        <end position="31"/>
    </location>
</feature>
<feature type="transmembrane region" description="Helical" evidence="1">
    <location>
        <begin position="3"/>
        <end position="23"/>
    </location>
</feature>
<organism>
    <name type="scientific">Trichodesmium erythraeum (strain IMS101)</name>
    <dbReference type="NCBI Taxonomy" id="203124"/>
    <lineage>
        <taxon>Bacteria</taxon>
        <taxon>Bacillati</taxon>
        <taxon>Cyanobacteriota</taxon>
        <taxon>Cyanophyceae</taxon>
        <taxon>Oscillatoriophycideae</taxon>
        <taxon>Oscillatoriales</taxon>
        <taxon>Microcoleaceae</taxon>
        <taxon>Trichodesmium</taxon>
    </lineage>
</organism>